<organism>
    <name type="scientific">Escherichia coli O8 (strain IAI1)</name>
    <dbReference type="NCBI Taxonomy" id="585034"/>
    <lineage>
        <taxon>Bacteria</taxon>
        <taxon>Pseudomonadati</taxon>
        <taxon>Pseudomonadota</taxon>
        <taxon>Gammaproteobacteria</taxon>
        <taxon>Enterobacterales</taxon>
        <taxon>Enterobacteriaceae</taxon>
        <taxon>Escherichia</taxon>
    </lineage>
</organism>
<reference key="1">
    <citation type="journal article" date="2009" name="PLoS Genet.">
        <title>Organised genome dynamics in the Escherichia coli species results in highly diverse adaptive paths.</title>
        <authorList>
            <person name="Touchon M."/>
            <person name="Hoede C."/>
            <person name="Tenaillon O."/>
            <person name="Barbe V."/>
            <person name="Baeriswyl S."/>
            <person name="Bidet P."/>
            <person name="Bingen E."/>
            <person name="Bonacorsi S."/>
            <person name="Bouchier C."/>
            <person name="Bouvet O."/>
            <person name="Calteau A."/>
            <person name="Chiapello H."/>
            <person name="Clermont O."/>
            <person name="Cruveiller S."/>
            <person name="Danchin A."/>
            <person name="Diard M."/>
            <person name="Dossat C."/>
            <person name="Karoui M.E."/>
            <person name="Frapy E."/>
            <person name="Garry L."/>
            <person name="Ghigo J.M."/>
            <person name="Gilles A.M."/>
            <person name="Johnson J."/>
            <person name="Le Bouguenec C."/>
            <person name="Lescat M."/>
            <person name="Mangenot S."/>
            <person name="Martinez-Jehanne V."/>
            <person name="Matic I."/>
            <person name="Nassif X."/>
            <person name="Oztas S."/>
            <person name="Petit M.A."/>
            <person name="Pichon C."/>
            <person name="Rouy Z."/>
            <person name="Ruf C.S."/>
            <person name="Schneider D."/>
            <person name="Tourret J."/>
            <person name="Vacherie B."/>
            <person name="Vallenet D."/>
            <person name="Medigue C."/>
            <person name="Rocha E.P.C."/>
            <person name="Denamur E."/>
        </authorList>
    </citation>
    <scope>NUCLEOTIDE SEQUENCE [LARGE SCALE GENOMIC DNA]</scope>
    <source>
        <strain>IAI1</strain>
    </source>
</reference>
<proteinExistence type="inferred from homology"/>
<sequence>MSTAKLVKSKATNLLYTRNDVSDSEKKATVELLNRQVIQFIDLSLITKQAHWNMRGANFIAVHEMLDGFRTALIDHLDTMAERAVQLGGVALGTTQVINSKTPLKSYPLDIHNVQDHLKELADRYAIVANDVRKAIGEAKDDDTADILTAASRDLDKFLWFIESNIE</sequence>
<accession>B7M787</accession>
<protein>
    <recommendedName>
        <fullName evidence="1">DNA protection during starvation protein</fullName>
        <ecNumber evidence="1">1.16.-.-</ecNumber>
    </recommendedName>
</protein>
<evidence type="ECO:0000255" key="1">
    <source>
        <dbReference type="HAMAP-Rule" id="MF_01441"/>
    </source>
</evidence>
<dbReference type="EC" id="1.16.-.-" evidence="1"/>
<dbReference type="EMBL" id="CU928160">
    <property type="protein sequence ID" value="CAQ97715.1"/>
    <property type="molecule type" value="Genomic_DNA"/>
</dbReference>
<dbReference type="RefSeq" id="WP_000100800.1">
    <property type="nucleotide sequence ID" value="NC_011741.1"/>
</dbReference>
<dbReference type="SMR" id="B7M787"/>
<dbReference type="GeneID" id="93776616"/>
<dbReference type="KEGG" id="ecr:ECIAI1_0850"/>
<dbReference type="HOGENOM" id="CLU_098183_1_2_6"/>
<dbReference type="GO" id="GO:0005737">
    <property type="term" value="C:cytoplasm"/>
    <property type="evidence" value="ECO:0007669"/>
    <property type="project" value="UniProtKB-UniRule"/>
</dbReference>
<dbReference type="GO" id="GO:0009295">
    <property type="term" value="C:nucleoid"/>
    <property type="evidence" value="ECO:0007669"/>
    <property type="project" value="UniProtKB-SubCell"/>
</dbReference>
<dbReference type="GO" id="GO:0003677">
    <property type="term" value="F:DNA binding"/>
    <property type="evidence" value="ECO:0007669"/>
    <property type="project" value="UniProtKB-UniRule"/>
</dbReference>
<dbReference type="GO" id="GO:0008199">
    <property type="term" value="F:ferric iron binding"/>
    <property type="evidence" value="ECO:0007669"/>
    <property type="project" value="UniProtKB-UniRule"/>
</dbReference>
<dbReference type="GO" id="GO:0016722">
    <property type="term" value="F:oxidoreductase activity, acting on metal ions"/>
    <property type="evidence" value="ECO:0007669"/>
    <property type="project" value="InterPro"/>
</dbReference>
<dbReference type="GO" id="GO:0030261">
    <property type="term" value="P:chromosome condensation"/>
    <property type="evidence" value="ECO:0007669"/>
    <property type="project" value="UniProtKB-KW"/>
</dbReference>
<dbReference type="GO" id="GO:0006879">
    <property type="term" value="P:intracellular iron ion homeostasis"/>
    <property type="evidence" value="ECO:0007669"/>
    <property type="project" value="UniProtKB-KW"/>
</dbReference>
<dbReference type="CDD" id="cd01043">
    <property type="entry name" value="DPS"/>
    <property type="match status" value="1"/>
</dbReference>
<dbReference type="FunFam" id="1.20.1260.10:FF:000003">
    <property type="entry name" value="DNA protection during starvation protein"/>
    <property type="match status" value="1"/>
</dbReference>
<dbReference type="Gene3D" id="1.20.1260.10">
    <property type="match status" value="1"/>
</dbReference>
<dbReference type="HAMAP" id="MF_01441">
    <property type="entry name" value="Dps"/>
    <property type="match status" value="1"/>
</dbReference>
<dbReference type="InterPro" id="IPR002177">
    <property type="entry name" value="DPS_DNA-bd"/>
</dbReference>
<dbReference type="InterPro" id="IPR023188">
    <property type="entry name" value="DPS_DNA-bd_CS"/>
</dbReference>
<dbReference type="InterPro" id="IPR023067">
    <property type="entry name" value="Dps_gammaproteobac"/>
</dbReference>
<dbReference type="InterPro" id="IPR012347">
    <property type="entry name" value="Ferritin-like"/>
</dbReference>
<dbReference type="InterPro" id="IPR009078">
    <property type="entry name" value="Ferritin-like_SF"/>
</dbReference>
<dbReference type="InterPro" id="IPR008331">
    <property type="entry name" value="Ferritin_DPS_dom"/>
</dbReference>
<dbReference type="NCBIfam" id="NF006975">
    <property type="entry name" value="PRK09448.1"/>
    <property type="match status" value="1"/>
</dbReference>
<dbReference type="PANTHER" id="PTHR42932:SF3">
    <property type="entry name" value="DNA PROTECTION DURING STARVATION PROTEIN"/>
    <property type="match status" value="1"/>
</dbReference>
<dbReference type="PANTHER" id="PTHR42932">
    <property type="entry name" value="GENERAL STRESS PROTEIN 20U"/>
    <property type="match status" value="1"/>
</dbReference>
<dbReference type="Pfam" id="PF00210">
    <property type="entry name" value="Ferritin"/>
    <property type="match status" value="1"/>
</dbReference>
<dbReference type="PIRSF" id="PIRSF005900">
    <property type="entry name" value="Dps"/>
    <property type="match status" value="1"/>
</dbReference>
<dbReference type="PRINTS" id="PR01346">
    <property type="entry name" value="HELNAPAPROT"/>
</dbReference>
<dbReference type="SUPFAM" id="SSF47240">
    <property type="entry name" value="Ferritin-like"/>
    <property type="match status" value="1"/>
</dbReference>
<dbReference type="PROSITE" id="PS00818">
    <property type="entry name" value="DPS_1"/>
    <property type="match status" value="1"/>
</dbReference>
<dbReference type="PROSITE" id="PS00819">
    <property type="entry name" value="DPS_2"/>
    <property type="match status" value="1"/>
</dbReference>
<name>DPS_ECO8A</name>
<keyword id="KW-0963">Cytoplasm</keyword>
<keyword id="KW-0226">DNA condensation</keyword>
<keyword id="KW-0238">DNA-binding</keyword>
<keyword id="KW-0408">Iron</keyword>
<keyword id="KW-0409">Iron storage</keyword>
<keyword id="KW-0479">Metal-binding</keyword>
<keyword id="KW-0560">Oxidoreductase</keyword>
<comment type="function">
    <text evidence="1">During stationary phase, binds the chromosome non-specifically, forming a highly ordered and stable dps-DNA co-crystal within which chromosomal DNA is condensed and protected from diverse damages. It protects DNA from oxidative damage by sequestering intracellular Fe(2+) ion and storing it in the form of Fe(3+) oxyhydroxide mineral, which can be released after reduction. One hydrogen peroxide oxidizes two Fe(2+) ions, which prevents hydroxyl radical production by the Fenton reaction. Dps also protects the cell from UV and gamma irradiation, iron and copper toxicity, thermal stress and acid and base shocks. Also shows a weak catalase activity.</text>
</comment>
<comment type="catalytic activity">
    <reaction evidence="1">
        <text>2 Fe(2+) + H2O2 + 2 H(+) = 2 Fe(3+) + 2 H2O</text>
        <dbReference type="Rhea" id="RHEA:48712"/>
        <dbReference type="ChEBI" id="CHEBI:15377"/>
        <dbReference type="ChEBI" id="CHEBI:15378"/>
        <dbReference type="ChEBI" id="CHEBI:16240"/>
        <dbReference type="ChEBI" id="CHEBI:29033"/>
        <dbReference type="ChEBI" id="CHEBI:29034"/>
    </reaction>
</comment>
<comment type="subunit">
    <text evidence="1">Homododecamer. The 12 subunits form a hollow sphere into which the mineral iron core of up to 500 Fe(3+) can be deposited.</text>
</comment>
<comment type="subcellular location">
    <subcellularLocation>
        <location evidence="1">Cytoplasm</location>
        <location evidence="1">Nucleoid</location>
    </subcellularLocation>
</comment>
<comment type="similarity">
    <text evidence="1">Belongs to the Dps family.</text>
</comment>
<feature type="chain" id="PRO_1000145901" description="DNA protection during starvation protein">
    <location>
        <begin position="1"/>
        <end position="167"/>
    </location>
</feature>
<feature type="binding site" evidence="1">
    <location>
        <position position="51"/>
    </location>
    <ligand>
        <name>Fe cation</name>
        <dbReference type="ChEBI" id="CHEBI:24875"/>
        <label>1</label>
        <note>ligand shared between two neighboring subunits</note>
    </ligand>
</feature>
<feature type="binding site" description="in other chain" evidence="1">
    <location>
        <position position="78"/>
    </location>
    <ligand>
        <name>Fe cation</name>
        <dbReference type="ChEBI" id="CHEBI:24875"/>
        <label>1</label>
        <note>ligand shared between two neighboring subunits</note>
    </ligand>
</feature>
<feature type="binding site" description="in other chain" evidence="1">
    <location>
        <position position="82"/>
    </location>
    <ligand>
        <name>Fe cation</name>
        <dbReference type="ChEBI" id="CHEBI:24875"/>
        <label>1</label>
        <note>ligand shared between two neighboring subunits</note>
    </ligand>
</feature>
<feature type="binding site" evidence="1">
    <location>
        <position position="82"/>
    </location>
    <ligand>
        <name>Fe cation</name>
        <dbReference type="ChEBI" id="CHEBI:24875"/>
        <label>2</label>
    </ligand>
</feature>
<gene>
    <name evidence="1" type="primary">dps</name>
    <name type="ordered locus">ECIAI1_0850</name>
</gene>